<accession>P0C7P2</accession>
<accession>Q5TI83</accession>
<accession>Q5TI84</accession>
<gene>
    <name type="primary">RFPL3S</name>
    <name type="synonym">RFPL3-AS1</name>
</gene>
<protein>
    <recommendedName>
        <fullName>Putative protein RFPL3S</fullName>
    </recommendedName>
    <alternativeName>
        <fullName>RFPL3 antisense RNA 1</fullName>
    </alternativeName>
    <alternativeName>
        <fullName>RFPL3 antisense gene protein 1</fullName>
    </alternativeName>
    <alternativeName>
        <fullName>Ret finger protein-like 3 antisense gene protein</fullName>
    </alternativeName>
</protein>
<feature type="chain" id="PRO_0000341582" description="Putative protein RFPL3S">
    <location>
        <begin position="1"/>
        <end position="107"/>
    </location>
</feature>
<organism>
    <name type="scientific">Homo sapiens</name>
    <name type="common">Human</name>
    <dbReference type="NCBI Taxonomy" id="9606"/>
    <lineage>
        <taxon>Eukaryota</taxon>
        <taxon>Metazoa</taxon>
        <taxon>Chordata</taxon>
        <taxon>Craniata</taxon>
        <taxon>Vertebrata</taxon>
        <taxon>Euteleostomi</taxon>
        <taxon>Mammalia</taxon>
        <taxon>Eutheria</taxon>
        <taxon>Euarchontoglires</taxon>
        <taxon>Primates</taxon>
        <taxon>Haplorrhini</taxon>
        <taxon>Catarrhini</taxon>
        <taxon>Hominidae</taxon>
        <taxon>Homo</taxon>
    </lineage>
</organism>
<reference key="1">
    <citation type="journal article" date="1999" name="Genome Res.">
        <title>Duplications on human chromosome 22 reveal a novel Ret finger protein-like gene family with sense and endogenous antisense transcripts.</title>
        <authorList>
            <person name="Seroussi E."/>
            <person name="Kedra D."/>
            <person name="Pan H.-Q."/>
            <person name="Peyrad M."/>
            <person name="Schwartz C."/>
            <person name="Scambler P."/>
            <person name="Donnai D."/>
            <person name="Roe B.A."/>
            <person name="Dumanski J.P."/>
        </authorList>
    </citation>
    <scope>NUCLEOTIDE SEQUENCE [MRNA]</scope>
    <scope>TISSUE SPECIFICITY</scope>
</reference>
<reference key="2">
    <citation type="journal article" date="2004" name="Genome Biol.">
        <title>A genome annotation-driven approach to cloning the human ORFeome.</title>
        <authorList>
            <person name="Collins J.E."/>
            <person name="Wright C.L."/>
            <person name="Edwards C.A."/>
            <person name="Davis M.P."/>
            <person name="Grinham J.A."/>
            <person name="Cole C.G."/>
            <person name="Goward M.E."/>
            <person name="Aguado B."/>
            <person name="Mallya M."/>
            <person name="Mokrab Y."/>
            <person name="Huckle E.J."/>
            <person name="Beare D.M."/>
            <person name="Dunham I."/>
        </authorList>
    </citation>
    <scope>NUCLEOTIDE SEQUENCE [LARGE SCALE MRNA]</scope>
</reference>
<reference key="3">
    <citation type="journal article" date="1999" name="Nature">
        <title>The DNA sequence of human chromosome 22.</title>
        <authorList>
            <person name="Dunham I."/>
            <person name="Hunt A.R."/>
            <person name="Collins J.E."/>
            <person name="Bruskiewich R."/>
            <person name="Beare D.M."/>
            <person name="Clamp M."/>
            <person name="Smink L.J."/>
            <person name="Ainscough R."/>
            <person name="Almeida J.P."/>
            <person name="Babbage A.K."/>
            <person name="Bagguley C."/>
            <person name="Bailey J."/>
            <person name="Barlow K.F."/>
            <person name="Bates K.N."/>
            <person name="Beasley O.P."/>
            <person name="Bird C.P."/>
            <person name="Blakey S.E."/>
            <person name="Bridgeman A.M."/>
            <person name="Buck D."/>
            <person name="Burgess J."/>
            <person name="Burrill W.D."/>
            <person name="Burton J."/>
            <person name="Carder C."/>
            <person name="Carter N.P."/>
            <person name="Chen Y."/>
            <person name="Clark G."/>
            <person name="Clegg S.M."/>
            <person name="Cobley V.E."/>
            <person name="Cole C.G."/>
            <person name="Collier R.E."/>
            <person name="Connor R."/>
            <person name="Conroy D."/>
            <person name="Corby N.R."/>
            <person name="Coville G.J."/>
            <person name="Cox A.V."/>
            <person name="Davis J."/>
            <person name="Dawson E."/>
            <person name="Dhami P.D."/>
            <person name="Dockree C."/>
            <person name="Dodsworth S.J."/>
            <person name="Durbin R.M."/>
            <person name="Ellington A.G."/>
            <person name="Evans K.L."/>
            <person name="Fey J.M."/>
            <person name="Fleming K."/>
            <person name="French L."/>
            <person name="Garner A.A."/>
            <person name="Gilbert J.G.R."/>
            <person name="Goward M.E."/>
            <person name="Grafham D.V."/>
            <person name="Griffiths M.N.D."/>
            <person name="Hall C."/>
            <person name="Hall R.E."/>
            <person name="Hall-Tamlyn G."/>
            <person name="Heathcott R.W."/>
            <person name="Ho S."/>
            <person name="Holmes S."/>
            <person name="Hunt S.E."/>
            <person name="Jones M.C."/>
            <person name="Kershaw J."/>
            <person name="Kimberley A.M."/>
            <person name="King A."/>
            <person name="Laird G.K."/>
            <person name="Langford C.F."/>
            <person name="Leversha M.A."/>
            <person name="Lloyd C."/>
            <person name="Lloyd D.M."/>
            <person name="Martyn I.D."/>
            <person name="Mashreghi-Mohammadi M."/>
            <person name="Matthews L.H."/>
            <person name="Mccann O.T."/>
            <person name="Mcclay J."/>
            <person name="Mclaren S."/>
            <person name="McMurray A.A."/>
            <person name="Milne S.A."/>
            <person name="Mortimore B.J."/>
            <person name="Odell C.N."/>
            <person name="Pavitt R."/>
            <person name="Pearce A.V."/>
            <person name="Pearson D."/>
            <person name="Phillimore B.J.C.T."/>
            <person name="Phillips S.H."/>
            <person name="Plumb R.W."/>
            <person name="Ramsay H."/>
            <person name="Ramsey Y."/>
            <person name="Rogers L."/>
            <person name="Ross M.T."/>
            <person name="Scott C.E."/>
            <person name="Sehra H.K."/>
            <person name="Skuce C.D."/>
            <person name="Smalley S."/>
            <person name="Smith M.L."/>
            <person name="Soderlund C."/>
            <person name="Spragon L."/>
            <person name="Steward C.A."/>
            <person name="Sulston J.E."/>
            <person name="Swann R.M."/>
            <person name="Vaudin M."/>
            <person name="Wall M."/>
            <person name="Wallis J.M."/>
            <person name="Whiteley M.N."/>
            <person name="Willey D.L."/>
            <person name="Williams L."/>
            <person name="Williams S.A."/>
            <person name="Williamson H."/>
            <person name="Wilmer T.E."/>
            <person name="Wilming L."/>
            <person name="Wright C.L."/>
            <person name="Hubbard T."/>
            <person name="Bentley D.R."/>
            <person name="Beck S."/>
            <person name="Rogers J."/>
            <person name="Shimizu N."/>
            <person name="Minoshima S."/>
            <person name="Kawasaki K."/>
            <person name="Sasaki T."/>
            <person name="Asakawa S."/>
            <person name="Kudoh J."/>
            <person name="Shintani A."/>
            <person name="Shibuya K."/>
            <person name="Yoshizaki Y."/>
            <person name="Aoki N."/>
            <person name="Mitsuyama S."/>
            <person name="Roe B.A."/>
            <person name="Chen F."/>
            <person name="Chu L."/>
            <person name="Crabtree J."/>
            <person name="Deschamps S."/>
            <person name="Do A."/>
            <person name="Do T."/>
            <person name="Dorman A."/>
            <person name="Fang F."/>
            <person name="Fu Y."/>
            <person name="Hu P."/>
            <person name="Hua A."/>
            <person name="Kenton S."/>
            <person name="Lai H."/>
            <person name="Lao H.I."/>
            <person name="Lewis J."/>
            <person name="Lewis S."/>
            <person name="Lin S.-P."/>
            <person name="Loh P."/>
            <person name="Malaj E."/>
            <person name="Nguyen T."/>
            <person name="Pan H."/>
            <person name="Phan S."/>
            <person name="Qi S."/>
            <person name="Qian Y."/>
            <person name="Ray L."/>
            <person name="Ren Q."/>
            <person name="Shaull S."/>
            <person name="Sloan D."/>
            <person name="Song L."/>
            <person name="Wang Q."/>
            <person name="Wang Y."/>
            <person name="Wang Z."/>
            <person name="White J."/>
            <person name="Willingham D."/>
            <person name="Wu H."/>
            <person name="Yao Z."/>
            <person name="Zhan M."/>
            <person name="Zhang G."/>
            <person name="Chissoe S."/>
            <person name="Murray J."/>
            <person name="Miller N."/>
            <person name="Minx P."/>
            <person name="Fulton R."/>
            <person name="Johnson D."/>
            <person name="Bemis G."/>
            <person name="Bentley D."/>
            <person name="Bradshaw H."/>
            <person name="Bourne S."/>
            <person name="Cordes M."/>
            <person name="Du Z."/>
            <person name="Fulton L."/>
            <person name="Goela D."/>
            <person name="Graves T."/>
            <person name="Hawkins J."/>
            <person name="Hinds K."/>
            <person name="Kemp K."/>
            <person name="Latreille P."/>
            <person name="Layman D."/>
            <person name="Ozersky P."/>
            <person name="Rohlfing T."/>
            <person name="Scheet P."/>
            <person name="Walker C."/>
            <person name="Wamsley A."/>
            <person name="Wohldmann P."/>
            <person name="Pepin K."/>
            <person name="Nelson J."/>
            <person name="Korf I."/>
            <person name="Bedell J.A."/>
            <person name="Hillier L.W."/>
            <person name="Mardis E."/>
            <person name="Waterston R."/>
            <person name="Wilson R."/>
            <person name="Emanuel B.S."/>
            <person name="Shaikh T."/>
            <person name="Kurahashi H."/>
            <person name="Saitta S."/>
            <person name="Budarf M.L."/>
            <person name="McDermid H.E."/>
            <person name="Johnson A."/>
            <person name="Wong A.C.C."/>
            <person name="Morrow B.E."/>
            <person name="Edelmann L."/>
            <person name="Kim U.J."/>
            <person name="Shizuya H."/>
            <person name="Simon M.I."/>
            <person name="Dumanski J.P."/>
            <person name="Peyrard M."/>
            <person name="Kedra D."/>
            <person name="Seroussi E."/>
            <person name="Fransson I."/>
            <person name="Tapia I."/>
            <person name="Bruder C.E."/>
            <person name="O'Brien K.P."/>
            <person name="Wilkinson P."/>
            <person name="Bodenteich A."/>
            <person name="Hartman K."/>
            <person name="Hu X."/>
            <person name="Khan A.S."/>
            <person name="Lane L."/>
            <person name="Tilahun Y."/>
            <person name="Wright H."/>
        </authorList>
    </citation>
    <scope>NUCLEOTIDE SEQUENCE [LARGE SCALE GENOMIC DNA]</scope>
</reference>
<sequence>MQTDTSNLSARSCRFCVMSPLRTLLRSSEMRRKLLAVSASKVISTVKRKTSCSASGQKPTPCLSSTSKAQISPDFSFFNSVSSSKIKTFHEETSLFQIFIGMLCGNT</sequence>
<evidence type="ECO:0000269" key="1">
    <source>
    </source>
</evidence>
<dbReference type="EMBL" id="AJ010233">
    <property type="status" value="NOT_ANNOTATED_CDS"/>
    <property type="molecule type" value="mRNA"/>
</dbReference>
<dbReference type="EMBL" id="CR456565">
    <property type="protein sequence ID" value="CAG30451.1"/>
    <property type="molecule type" value="mRNA"/>
</dbReference>
<dbReference type="EMBL" id="AL021937">
    <property type="status" value="NOT_ANNOTATED_CDS"/>
    <property type="molecule type" value="Genomic_DNA"/>
</dbReference>
<dbReference type="BioMuta" id="RFPL3S"/>
<dbReference type="PaxDb" id="9606-ENSP00000482492"/>
<dbReference type="UCSC" id="uc062dnc.1">
    <property type="organism name" value="human"/>
</dbReference>
<dbReference type="AGR" id="HGNC:9981"/>
<dbReference type="GeneCards" id="RFPL3S"/>
<dbReference type="HGNC" id="HGNC:9981">
    <property type="gene designation" value="RFPL3S"/>
</dbReference>
<dbReference type="MIM" id="605971">
    <property type="type" value="gene"/>
</dbReference>
<dbReference type="neXtProt" id="NX_P0C7P2"/>
<dbReference type="HOGENOM" id="CLU_175681_0_0_1"/>
<dbReference type="InParanoid" id="P0C7P2"/>
<dbReference type="PAN-GO" id="P0C7P2">
    <property type="GO annotations" value="0 GO annotations based on evolutionary models"/>
</dbReference>
<dbReference type="TreeFam" id="TF341410"/>
<dbReference type="ChiTaRS" id="RFPL3S">
    <property type="organism name" value="human"/>
</dbReference>
<dbReference type="Pharos" id="P0C7P2">
    <property type="development level" value="Tdark"/>
</dbReference>
<dbReference type="PRO" id="PR:P0C7P2"/>
<dbReference type="Proteomes" id="UP000005640">
    <property type="component" value="Unplaced"/>
</dbReference>
<dbReference type="RNAct" id="P0C7P2">
    <property type="molecule type" value="protein"/>
</dbReference>
<keyword id="KW-1185">Reference proteome</keyword>
<name>RFL3S_HUMAN</name>
<proteinExistence type="evidence at transcript level"/>
<comment type="tissue specificity">
    <text evidence="1">Strongly expressed in the testis and weakly in brain, placenta and pancreas.</text>
</comment>
<comment type="miscellaneous">
    <text>The gene encoding RFPL3S is located on the opposite strand of the gene encoding RFPL3. Its transcription may play a role in RFPL3 transcription regulation.</text>
</comment>